<sequence length="362" mass="38436">MGGRYKIAVLPGDGIGTEIVQVGVAMLEAAARRFDFAFDFEEAPIGGAAIDATGEPLPAATLELCKASDAVFLGAVGGPQWDTLPSDKRPEKALLGLRAGLGLFANLRPARILPQLVAASALKPEVVEGVDILVVRELTGGLYFGIPKGIFPEKKGGRRGVNTMSYSAFEIERIGRVAFEAARERRGKLCSVDKANVLEVSQLWREVLVGLAPEYPDVELTHMYVDNCAMQLVRRPRQFDTIVTENMFGDILSDEAAMLTGSIGMLPSASLGSGGPGLYEPVHGSAPDIAGQDKANPLAQVLSGAMLLRHSLRQPEAAQAVERAVQTVLEQGYRTGDIAAPGAQIVGCRAMGEQLLAAFERA</sequence>
<protein>
    <recommendedName>
        <fullName evidence="1">3-isopropylmalate dehydrogenase</fullName>
        <ecNumber evidence="1">1.1.1.85</ecNumber>
    </recommendedName>
    <alternativeName>
        <fullName evidence="1">3-IPM-DH</fullName>
    </alternativeName>
    <alternativeName>
        <fullName evidence="1">Beta-IPM dehydrogenase</fullName>
        <shortName evidence="1">IMDH</shortName>
    </alternativeName>
</protein>
<name>LEU3_GLOVI</name>
<proteinExistence type="inferred from homology"/>
<dbReference type="EC" id="1.1.1.85" evidence="1"/>
<dbReference type="EMBL" id="BA000045">
    <property type="protein sequence ID" value="BAC91492.1"/>
    <property type="molecule type" value="Genomic_DNA"/>
</dbReference>
<dbReference type="RefSeq" id="NP_926497.1">
    <property type="nucleotide sequence ID" value="NC_005125.1"/>
</dbReference>
<dbReference type="RefSeq" id="WP_011143540.1">
    <property type="nucleotide sequence ID" value="NC_005125.1"/>
</dbReference>
<dbReference type="SMR" id="Q7NFH4"/>
<dbReference type="STRING" id="251221.gene:10761064"/>
<dbReference type="EnsemblBacteria" id="BAC91492">
    <property type="protein sequence ID" value="BAC91492"/>
    <property type="gene ID" value="BAC91492"/>
</dbReference>
<dbReference type="KEGG" id="gvi:gll3551"/>
<dbReference type="PATRIC" id="fig|251221.4.peg.3584"/>
<dbReference type="eggNOG" id="COG0473">
    <property type="taxonomic scope" value="Bacteria"/>
</dbReference>
<dbReference type="HOGENOM" id="CLU_031953_0_3_3"/>
<dbReference type="InParanoid" id="Q7NFH4"/>
<dbReference type="OrthoDB" id="9806254at2"/>
<dbReference type="PhylomeDB" id="Q7NFH4"/>
<dbReference type="UniPathway" id="UPA00048">
    <property type="reaction ID" value="UER00072"/>
</dbReference>
<dbReference type="Proteomes" id="UP000000557">
    <property type="component" value="Chromosome"/>
</dbReference>
<dbReference type="GO" id="GO:0005829">
    <property type="term" value="C:cytosol"/>
    <property type="evidence" value="ECO:0000318"/>
    <property type="project" value="GO_Central"/>
</dbReference>
<dbReference type="GO" id="GO:0003862">
    <property type="term" value="F:3-isopropylmalate dehydrogenase activity"/>
    <property type="evidence" value="ECO:0000318"/>
    <property type="project" value="GO_Central"/>
</dbReference>
<dbReference type="GO" id="GO:0000287">
    <property type="term" value="F:magnesium ion binding"/>
    <property type="evidence" value="ECO:0007669"/>
    <property type="project" value="InterPro"/>
</dbReference>
<dbReference type="GO" id="GO:0051287">
    <property type="term" value="F:NAD binding"/>
    <property type="evidence" value="ECO:0007669"/>
    <property type="project" value="InterPro"/>
</dbReference>
<dbReference type="GO" id="GO:0009098">
    <property type="term" value="P:L-leucine biosynthetic process"/>
    <property type="evidence" value="ECO:0000318"/>
    <property type="project" value="GO_Central"/>
</dbReference>
<dbReference type="FunFam" id="3.40.718.10:FF:000028">
    <property type="entry name" value="3-isopropylmalate dehydrogenase"/>
    <property type="match status" value="1"/>
</dbReference>
<dbReference type="Gene3D" id="3.40.718.10">
    <property type="entry name" value="Isopropylmalate Dehydrogenase"/>
    <property type="match status" value="1"/>
</dbReference>
<dbReference type="HAMAP" id="MF_01033">
    <property type="entry name" value="LeuB_type1"/>
    <property type="match status" value="1"/>
</dbReference>
<dbReference type="InterPro" id="IPR019818">
    <property type="entry name" value="IsoCit/isopropylmalate_DH_CS"/>
</dbReference>
<dbReference type="InterPro" id="IPR024084">
    <property type="entry name" value="IsoPropMal-DH-like_dom"/>
</dbReference>
<dbReference type="InterPro" id="IPR004429">
    <property type="entry name" value="Isopropylmalate_DH"/>
</dbReference>
<dbReference type="NCBIfam" id="TIGR00169">
    <property type="entry name" value="leuB"/>
    <property type="match status" value="1"/>
</dbReference>
<dbReference type="PANTHER" id="PTHR42979">
    <property type="entry name" value="3-ISOPROPYLMALATE DEHYDROGENASE"/>
    <property type="match status" value="1"/>
</dbReference>
<dbReference type="PANTHER" id="PTHR42979:SF1">
    <property type="entry name" value="3-ISOPROPYLMALATE DEHYDROGENASE"/>
    <property type="match status" value="1"/>
</dbReference>
<dbReference type="Pfam" id="PF00180">
    <property type="entry name" value="Iso_dh"/>
    <property type="match status" value="1"/>
</dbReference>
<dbReference type="SMART" id="SM01329">
    <property type="entry name" value="Iso_dh"/>
    <property type="match status" value="1"/>
</dbReference>
<dbReference type="SUPFAM" id="SSF53659">
    <property type="entry name" value="Isocitrate/Isopropylmalate dehydrogenase-like"/>
    <property type="match status" value="1"/>
</dbReference>
<dbReference type="PROSITE" id="PS00470">
    <property type="entry name" value="IDH_IMDH"/>
    <property type="match status" value="1"/>
</dbReference>
<evidence type="ECO:0000255" key="1">
    <source>
        <dbReference type="HAMAP-Rule" id="MF_01033"/>
    </source>
</evidence>
<accession>Q7NFH4</accession>
<comment type="function">
    <text evidence="1">Catalyzes the oxidation of 3-carboxy-2-hydroxy-4-methylpentanoate (3-isopropylmalate) to 3-carboxy-4-methyl-2-oxopentanoate. The product decarboxylates to 4-methyl-2 oxopentanoate.</text>
</comment>
<comment type="catalytic activity">
    <reaction evidence="1">
        <text>(2R,3S)-3-isopropylmalate + NAD(+) = 4-methyl-2-oxopentanoate + CO2 + NADH</text>
        <dbReference type="Rhea" id="RHEA:32271"/>
        <dbReference type="ChEBI" id="CHEBI:16526"/>
        <dbReference type="ChEBI" id="CHEBI:17865"/>
        <dbReference type="ChEBI" id="CHEBI:35121"/>
        <dbReference type="ChEBI" id="CHEBI:57540"/>
        <dbReference type="ChEBI" id="CHEBI:57945"/>
        <dbReference type="EC" id="1.1.1.85"/>
    </reaction>
</comment>
<comment type="cofactor">
    <cofactor evidence="1">
        <name>Mg(2+)</name>
        <dbReference type="ChEBI" id="CHEBI:18420"/>
    </cofactor>
    <cofactor evidence="1">
        <name>Mn(2+)</name>
        <dbReference type="ChEBI" id="CHEBI:29035"/>
    </cofactor>
    <text evidence="1">Binds 1 Mg(2+) or Mn(2+) ion per subunit.</text>
</comment>
<comment type="pathway">
    <text evidence="1">Amino-acid biosynthesis; L-leucine biosynthesis; L-leucine from 3-methyl-2-oxobutanoate: step 3/4.</text>
</comment>
<comment type="subunit">
    <text evidence="1">Homodimer.</text>
</comment>
<comment type="subcellular location">
    <subcellularLocation>
        <location evidence="1">Cytoplasm</location>
    </subcellularLocation>
</comment>
<comment type="similarity">
    <text evidence="1">Belongs to the isocitrate and isopropylmalate dehydrogenases family. LeuB type 1 subfamily.</text>
</comment>
<keyword id="KW-0028">Amino-acid biosynthesis</keyword>
<keyword id="KW-0100">Branched-chain amino acid biosynthesis</keyword>
<keyword id="KW-0963">Cytoplasm</keyword>
<keyword id="KW-0432">Leucine biosynthesis</keyword>
<keyword id="KW-0460">Magnesium</keyword>
<keyword id="KW-0464">Manganese</keyword>
<keyword id="KW-0479">Metal-binding</keyword>
<keyword id="KW-0520">NAD</keyword>
<keyword id="KW-0560">Oxidoreductase</keyword>
<keyword id="KW-1185">Reference proteome</keyword>
<reference key="1">
    <citation type="journal article" date="2003" name="DNA Res.">
        <title>Complete genome structure of Gloeobacter violaceus PCC 7421, a cyanobacterium that lacks thylakoids.</title>
        <authorList>
            <person name="Nakamura Y."/>
            <person name="Kaneko T."/>
            <person name="Sato S."/>
            <person name="Mimuro M."/>
            <person name="Miyashita H."/>
            <person name="Tsuchiya T."/>
            <person name="Sasamoto S."/>
            <person name="Watanabe A."/>
            <person name="Kawashima K."/>
            <person name="Kishida Y."/>
            <person name="Kiyokawa C."/>
            <person name="Kohara M."/>
            <person name="Matsumoto M."/>
            <person name="Matsuno A."/>
            <person name="Nakazaki N."/>
            <person name="Shimpo S."/>
            <person name="Takeuchi C."/>
            <person name="Yamada M."/>
            <person name="Tabata S."/>
        </authorList>
    </citation>
    <scope>NUCLEOTIDE SEQUENCE [LARGE SCALE GENOMIC DNA]</scope>
    <source>
        <strain>ATCC 29082 / PCC 7421</strain>
    </source>
</reference>
<feature type="chain" id="PRO_0000083696" description="3-isopropylmalate dehydrogenase">
    <location>
        <begin position="1"/>
        <end position="362"/>
    </location>
</feature>
<feature type="binding site" evidence="1">
    <location>
        <begin position="78"/>
        <end position="91"/>
    </location>
    <ligand>
        <name>NAD(+)</name>
        <dbReference type="ChEBI" id="CHEBI:57540"/>
    </ligand>
</feature>
<feature type="binding site" evidence="1">
    <location>
        <position position="98"/>
    </location>
    <ligand>
        <name>substrate</name>
    </ligand>
</feature>
<feature type="binding site" evidence="1">
    <location>
        <position position="108"/>
    </location>
    <ligand>
        <name>substrate</name>
    </ligand>
</feature>
<feature type="binding site" evidence="1">
    <location>
        <position position="136"/>
    </location>
    <ligand>
        <name>substrate</name>
    </ligand>
</feature>
<feature type="binding site" evidence="1">
    <location>
        <position position="226"/>
    </location>
    <ligand>
        <name>Mg(2+)</name>
        <dbReference type="ChEBI" id="CHEBI:18420"/>
    </ligand>
</feature>
<feature type="binding site" evidence="1">
    <location>
        <position position="226"/>
    </location>
    <ligand>
        <name>substrate</name>
    </ligand>
</feature>
<feature type="binding site" evidence="1">
    <location>
        <position position="250"/>
    </location>
    <ligand>
        <name>Mg(2+)</name>
        <dbReference type="ChEBI" id="CHEBI:18420"/>
    </ligand>
</feature>
<feature type="binding site" evidence="1">
    <location>
        <position position="254"/>
    </location>
    <ligand>
        <name>Mg(2+)</name>
        <dbReference type="ChEBI" id="CHEBI:18420"/>
    </ligand>
</feature>
<feature type="binding site" evidence="1">
    <location>
        <begin position="284"/>
        <end position="296"/>
    </location>
    <ligand>
        <name>NAD(+)</name>
        <dbReference type="ChEBI" id="CHEBI:57540"/>
    </ligand>
</feature>
<feature type="site" description="Important for catalysis" evidence="1">
    <location>
        <position position="143"/>
    </location>
</feature>
<feature type="site" description="Important for catalysis" evidence="1">
    <location>
        <position position="194"/>
    </location>
</feature>
<gene>
    <name evidence="1" type="primary">leuB</name>
    <name type="ordered locus">gll3551</name>
</gene>
<organism>
    <name type="scientific">Gloeobacter violaceus (strain ATCC 29082 / PCC 7421)</name>
    <dbReference type="NCBI Taxonomy" id="251221"/>
    <lineage>
        <taxon>Bacteria</taxon>
        <taxon>Bacillati</taxon>
        <taxon>Cyanobacteriota</taxon>
        <taxon>Cyanophyceae</taxon>
        <taxon>Gloeobacterales</taxon>
        <taxon>Gloeobacteraceae</taxon>
        <taxon>Gloeobacter</taxon>
    </lineage>
</organism>